<protein>
    <recommendedName>
        <fullName evidence="1">Putative pre-16S rRNA nuclease</fullName>
        <ecNumber evidence="1">3.1.-.-</ecNumber>
    </recommendedName>
</protein>
<reference key="1">
    <citation type="submission" date="2008-04" db="EMBL/GenBank/DDBJ databases">
        <title>Complete sequence of chromosome of Natranaerobius thermophilus JW/NM-WN-LF.</title>
        <authorList>
            <consortium name="US DOE Joint Genome Institute"/>
            <person name="Copeland A."/>
            <person name="Lucas S."/>
            <person name="Lapidus A."/>
            <person name="Glavina del Rio T."/>
            <person name="Dalin E."/>
            <person name="Tice H."/>
            <person name="Bruce D."/>
            <person name="Goodwin L."/>
            <person name="Pitluck S."/>
            <person name="Chertkov O."/>
            <person name="Brettin T."/>
            <person name="Detter J.C."/>
            <person name="Han C."/>
            <person name="Kuske C.R."/>
            <person name="Schmutz J."/>
            <person name="Larimer F."/>
            <person name="Land M."/>
            <person name="Hauser L."/>
            <person name="Kyrpides N."/>
            <person name="Lykidis A."/>
            <person name="Mesbah N.M."/>
            <person name="Wiegel J."/>
        </authorList>
    </citation>
    <scope>NUCLEOTIDE SEQUENCE [LARGE SCALE GENOMIC DNA]</scope>
    <source>
        <strain>ATCC BAA-1301 / DSM 18059 / JW/NM-WN-LF</strain>
    </source>
</reference>
<proteinExistence type="inferred from homology"/>
<keyword id="KW-0963">Cytoplasm</keyword>
<keyword id="KW-0378">Hydrolase</keyword>
<keyword id="KW-0540">Nuclease</keyword>
<keyword id="KW-1185">Reference proteome</keyword>
<keyword id="KW-0690">Ribosome biogenesis</keyword>
<dbReference type="EC" id="3.1.-.-" evidence="1"/>
<dbReference type="EMBL" id="CP001034">
    <property type="protein sequence ID" value="ACB85350.1"/>
    <property type="molecule type" value="Genomic_DNA"/>
</dbReference>
<dbReference type="RefSeq" id="WP_012448217.1">
    <property type="nucleotide sequence ID" value="NC_010718.1"/>
</dbReference>
<dbReference type="SMR" id="B2A5J5"/>
<dbReference type="FunCoup" id="B2A5J5">
    <property type="interactions" value="281"/>
</dbReference>
<dbReference type="STRING" id="457570.Nther_1778"/>
<dbReference type="KEGG" id="nth:Nther_1778"/>
<dbReference type="eggNOG" id="COG0816">
    <property type="taxonomic scope" value="Bacteria"/>
</dbReference>
<dbReference type="HOGENOM" id="CLU_098240_2_0_9"/>
<dbReference type="InParanoid" id="B2A5J5"/>
<dbReference type="OrthoDB" id="9796140at2"/>
<dbReference type="Proteomes" id="UP000001683">
    <property type="component" value="Chromosome"/>
</dbReference>
<dbReference type="GO" id="GO:0005829">
    <property type="term" value="C:cytosol"/>
    <property type="evidence" value="ECO:0007669"/>
    <property type="project" value="TreeGrafter"/>
</dbReference>
<dbReference type="GO" id="GO:0004518">
    <property type="term" value="F:nuclease activity"/>
    <property type="evidence" value="ECO:0007669"/>
    <property type="project" value="UniProtKB-KW"/>
</dbReference>
<dbReference type="GO" id="GO:0000967">
    <property type="term" value="P:rRNA 5'-end processing"/>
    <property type="evidence" value="ECO:0007669"/>
    <property type="project" value="UniProtKB-UniRule"/>
</dbReference>
<dbReference type="CDD" id="cd16964">
    <property type="entry name" value="YqgF"/>
    <property type="match status" value="1"/>
</dbReference>
<dbReference type="Gene3D" id="3.30.420.140">
    <property type="entry name" value="YqgF/RNase H-like domain"/>
    <property type="match status" value="1"/>
</dbReference>
<dbReference type="HAMAP" id="MF_00651">
    <property type="entry name" value="Nuclease_YqgF"/>
    <property type="match status" value="1"/>
</dbReference>
<dbReference type="InterPro" id="IPR012337">
    <property type="entry name" value="RNaseH-like_sf"/>
</dbReference>
<dbReference type="InterPro" id="IPR005227">
    <property type="entry name" value="YqgF"/>
</dbReference>
<dbReference type="InterPro" id="IPR006641">
    <property type="entry name" value="YqgF/RNaseH-like_dom"/>
</dbReference>
<dbReference type="InterPro" id="IPR037027">
    <property type="entry name" value="YqgF/RNaseH-like_dom_sf"/>
</dbReference>
<dbReference type="NCBIfam" id="TIGR00250">
    <property type="entry name" value="RNAse_H_YqgF"/>
    <property type="match status" value="1"/>
</dbReference>
<dbReference type="PANTHER" id="PTHR33317">
    <property type="entry name" value="POLYNUCLEOTIDYL TRANSFERASE, RIBONUCLEASE H-LIKE SUPERFAMILY PROTEIN"/>
    <property type="match status" value="1"/>
</dbReference>
<dbReference type="PANTHER" id="PTHR33317:SF4">
    <property type="entry name" value="POLYNUCLEOTIDYL TRANSFERASE, RIBONUCLEASE H-LIKE SUPERFAMILY PROTEIN"/>
    <property type="match status" value="1"/>
</dbReference>
<dbReference type="Pfam" id="PF03652">
    <property type="entry name" value="RuvX"/>
    <property type="match status" value="1"/>
</dbReference>
<dbReference type="SMART" id="SM00732">
    <property type="entry name" value="YqgFc"/>
    <property type="match status" value="1"/>
</dbReference>
<dbReference type="SUPFAM" id="SSF53098">
    <property type="entry name" value="Ribonuclease H-like"/>
    <property type="match status" value="1"/>
</dbReference>
<organism>
    <name type="scientific">Natranaerobius thermophilus (strain ATCC BAA-1301 / DSM 18059 / JW/NM-WN-LF)</name>
    <dbReference type="NCBI Taxonomy" id="457570"/>
    <lineage>
        <taxon>Bacteria</taxon>
        <taxon>Bacillati</taxon>
        <taxon>Bacillota</taxon>
        <taxon>Clostridia</taxon>
        <taxon>Natranaerobiales</taxon>
        <taxon>Natranaerobiaceae</taxon>
        <taxon>Natranaerobius</taxon>
    </lineage>
</organism>
<name>YQGF_NATTJ</name>
<feature type="chain" id="PRO_1000131051" description="Putative pre-16S rRNA nuclease">
    <location>
        <begin position="1"/>
        <end position="141"/>
    </location>
</feature>
<sequence>MRIMGFDLGEATIGVAVSDALQLTAQGKTVIKRQSLEKDIEQVTKLIEDYQVSKLIVGLPKNMNGSLGQMADQIMDFIKSLEQEVDIPIETVDERLTSRMAEQTLLEADVSRKKRKQVIDKLAAVNILQTYLDRQVNKNNN</sequence>
<evidence type="ECO:0000255" key="1">
    <source>
        <dbReference type="HAMAP-Rule" id="MF_00651"/>
    </source>
</evidence>
<comment type="function">
    <text evidence="1">Could be a nuclease involved in processing of the 5'-end of pre-16S rRNA.</text>
</comment>
<comment type="subcellular location">
    <subcellularLocation>
        <location evidence="1">Cytoplasm</location>
    </subcellularLocation>
</comment>
<comment type="similarity">
    <text evidence="1">Belongs to the YqgF nuclease family.</text>
</comment>
<gene>
    <name type="ordered locus">Nther_1778</name>
</gene>
<accession>B2A5J5</accession>